<protein>
    <recommendedName>
        <fullName evidence="1">NADH-quinone oxidoreductase subunit H</fullName>
        <ecNumber evidence="1">7.1.1.-</ecNumber>
    </recommendedName>
    <alternativeName>
        <fullName evidence="1">NADH dehydrogenase I subunit H</fullName>
    </alternativeName>
    <alternativeName>
        <fullName evidence="1">NDH-1 subunit H</fullName>
    </alternativeName>
</protein>
<comment type="function">
    <text evidence="1">NDH-1 shuttles electrons from NADH, via FMN and iron-sulfur (Fe-S) centers, to quinones in the respiratory chain. The immediate electron acceptor for the enzyme in this species is believed to be ubiquinone. Couples the redox reaction to proton translocation (for every two electrons transferred, four hydrogen ions are translocated across the cytoplasmic membrane), and thus conserves the redox energy in a proton gradient. This subunit may bind ubiquinone.</text>
</comment>
<comment type="catalytic activity">
    <reaction evidence="1">
        <text>a quinone + NADH + 5 H(+)(in) = a quinol + NAD(+) + 4 H(+)(out)</text>
        <dbReference type="Rhea" id="RHEA:57888"/>
        <dbReference type="ChEBI" id="CHEBI:15378"/>
        <dbReference type="ChEBI" id="CHEBI:24646"/>
        <dbReference type="ChEBI" id="CHEBI:57540"/>
        <dbReference type="ChEBI" id="CHEBI:57945"/>
        <dbReference type="ChEBI" id="CHEBI:132124"/>
    </reaction>
</comment>
<comment type="subunit">
    <text evidence="1">NDH-1 is composed of 14 different subunits. Subunits NuoA, H, J, K, L, M, N constitute the membrane sector of the complex.</text>
</comment>
<comment type="subcellular location">
    <subcellularLocation>
        <location evidence="1">Cell membrane</location>
        <topology evidence="1">Multi-pass membrane protein</topology>
    </subcellularLocation>
</comment>
<comment type="similarity">
    <text evidence="1">Belongs to the complex I subunit 1 family.</text>
</comment>
<feature type="chain" id="PRO_0000240117" description="NADH-quinone oxidoreductase subunit H">
    <location>
        <begin position="1"/>
        <end position="341"/>
    </location>
</feature>
<feature type="transmembrane region" description="Helical" evidence="1">
    <location>
        <begin position="4"/>
        <end position="24"/>
    </location>
</feature>
<feature type="transmembrane region" description="Helical" evidence="1">
    <location>
        <begin position="38"/>
        <end position="58"/>
    </location>
</feature>
<feature type="transmembrane region" description="Helical" evidence="1">
    <location>
        <begin position="70"/>
        <end position="90"/>
    </location>
</feature>
<feature type="transmembrane region" description="Helical" evidence="1">
    <location>
        <begin position="115"/>
        <end position="135"/>
    </location>
</feature>
<feature type="transmembrane region" description="Helical" evidence="1">
    <location>
        <begin position="161"/>
        <end position="181"/>
    </location>
</feature>
<feature type="transmembrane region" description="Helical" evidence="1">
    <location>
        <begin position="187"/>
        <end position="207"/>
    </location>
</feature>
<feature type="transmembrane region" description="Helical" evidence="1">
    <location>
        <begin position="239"/>
        <end position="259"/>
    </location>
</feature>
<feature type="transmembrane region" description="Helical" evidence="1">
    <location>
        <begin position="275"/>
        <end position="295"/>
    </location>
</feature>
<feature type="transmembrane region" description="Helical" evidence="1">
    <location>
        <begin position="314"/>
        <end position="334"/>
    </location>
</feature>
<keyword id="KW-1003">Cell membrane</keyword>
<keyword id="KW-0472">Membrane</keyword>
<keyword id="KW-0520">NAD</keyword>
<keyword id="KW-0874">Quinone</keyword>
<keyword id="KW-1278">Translocase</keyword>
<keyword id="KW-0812">Transmembrane</keyword>
<keyword id="KW-1133">Transmembrane helix</keyword>
<keyword id="KW-0830">Ubiquinone</keyword>
<proteinExistence type="inferred from homology"/>
<organism>
    <name type="scientific">Wolbachia pipientis wMel</name>
    <dbReference type="NCBI Taxonomy" id="163164"/>
    <lineage>
        <taxon>Bacteria</taxon>
        <taxon>Pseudomonadati</taxon>
        <taxon>Pseudomonadota</taxon>
        <taxon>Alphaproteobacteria</taxon>
        <taxon>Rickettsiales</taxon>
        <taxon>Anaplasmataceae</taxon>
        <taxon>Wolbachieae</taxon>
        <taxon>Wolbachia</taxon>
    </lineage>
</organism>
<reference key="1">
    <citation type="journal article" date="2004" name="PLoS Biol.">
        <title>Phylogenomics of the reproductive parasite Wolbachia pipientis wMel: a streamlined genome overrun by mobile genetic elements.</title>
        <authorList>
            <person name="Wu M."/>
            <person name="Sun L.V."/>
            <person name="Vamathevan J.J."/>
            <person name="Riegler M."/>
            <person name="DeBoy R.T."/>
            <person name="Brownlie J.C."/>
            <person name="McGraw E.A."/>
            <person name="Martin W."/>
            <person name="Esser C."/>
            <person name="Ahmadinejad N."/>
            <person name="Wiegand C."/>
            <person name="Madupu R."/>
            <person name="Beanan M.J."/>
            <person name="Brinkac L.M."/>
            <person name="Daugherty S.C."/>
            <person name="Durkin A.S."/>
            <person name="Kolonay J.F."/>
            <person name="Nelson W.C."/>
            <person name="Mohamoud Y."/>
            <person name="Lee P."/>
            <person name="Berry K.J."/>
            <person name="Young M.B."/>
            <person name="Utterback T.R."/>
            <person name="Weidman J.F."/>
            <person name="Nierman W.C."/>
            <person name="Paulsen I.T."/>
            <person name="Nelson K.E."/>
            <person name="Tettelin H."/>
            <person name="O'Neill S.L."/>
            <person name="Eisen J.A."/>
        </authorList>
    </citation>
    <scope>NUCLEOTIDE SEQUENCE [LARGE SCALE GENOMIC DNA]</scope>
</reference>
<accession>Q73IK1</accession>
<gene>
    <name evidence="1" type="primary">nuoH</name>
    <name type="ordered locus">WD_0159</name>
</gene>
<sequence>MNTLVNILFILVPLLLSVAYLTYFERKVLAAIQLRHGPSVVGPFGLLQPFADAIKLLIKEPIIPFRASTILFIMAPMLTFILALIAWAVIPFGAEVIVENGQQVIIPKVIANINVGVLYVLAISSLGVYGVIIAGWSSNSNYAFLGAIRSAAQMISYEVSIGLIVAAVVITTGTLNLGEMVVAKHNMPFWVDLLLMPIGIIFFISLLAETNRHPFDLPEAEAELVSGYNVEYSSMPFALFFLGEYANMILASAMMTIFFLGGWYPPLEFSLLYKIPGLIWFVLKIVILLFIFIWIRATIPRYRYDQLMRLGWKVFLPISVLWVILISGVLLFTGNLPGSNV</sequence>
<dbReference type="EC" id="7.1.1.-" evidence="1"/>
<dbReference type="EMBL" id="AE017196">
    <property type="protein sequence ID" value="AAS13911.1"/>
    <property type="molecule type" value="Genomic_DNA"/>
</dbReference>
<dbReference type="RefSeq" id="WP_010962402.1">
    <property type="nucleotide sequence ID" value="NZ_OX384529.1"/>
</dbReference>
<dbReference type="SMR" id="Q73IK1"/>
<dbReference type="EnsemblBacteria" id="AAS13911">
    <property type="protein sequence ID" value="AAS13911"/>
    <property type="gene ID" value="WD_0159"/>
</dbReference>
<dbReference type="GeneID" id="70035651"/>
<dbReference type="KEGG" id="wol:WD_0159"/>
<dbReference type="eggNOG" id="COG1005">
    <property type="taxonomic scope" value="Bacteria"/>
</dbReference>
<dbReference type="Proteomes" id="UP000008215">
    <property type="component" value="Chromosome"/>
</dbReference>
<dbReference type="GO" id="GO:0005886">
    <property type="term" value="C:plasma membrane"/>
    <property type="evidence" value="ECO:0007669"/>
    <property type="project" value="UniProtKB-SubCell"/>
</dbReference>
<dbReference type="GO" id="GO:0003954">
    <property type="term" value="F:NADH dehydrogenase activity"/>
    <property type="evidence" value="ECO:0007669"/>
    <property type="project" value="TreeGrafter"/>
</dbReference>
<dbReference type="GO" id="GO:0016655">
    <property type="term" value="F:oxidoreductase activity, acting on NAD(P)H, quinone or similar compound as acceptor"/>
    <property type="evidence" value="ECO:0007669"/>
    <property type="project" value="UniProtKB-UniRule"/>
</dbReference>
<dbReference type="GO" id="GO:0048038">
    <property type="term" value="F:quinone binding"/>
    <property type="evidence" value="ECO:0007669"/>
    <property type="project" value="UniProtKB-KW"/>
</dbReference>
<dbReference type="GO" id="GO:0009060">
    <property type="term" value="P:aerobic respiration"/>
    <property type="evidence" value="ECO:0007669"/>
    <property type="project" value="TreeGrafter"/>
</dbReference>
<dbReference type="HAMAP" id="MF_01350">
    <property type="entry name" value="NDH1_NuoH"/>
    <property type="match status" value="1"/>
</dbReference>
<dbReference type="InterPro" id="IPR001694">
    <property type="entry name" value="NADH_UbQ_OxRdtase_su1/FPO"/>
</dbReference>
<dbReference type="InterPro" id="IPR018086">
    <property type="entry name" value="NADH_UbQ_OxRdtase_su1_CS"/>
</dbReference>
<dbReference type="NCBIfam" id="NF004741">
    <property type="entry name" value="PRK06076.1-2"/>
    <property type="match status" value="1"/>
</dbReference>
<dbReference type="NCBIfam" id="NF004745">
    <property type="entry name" value="PRK06076.1-6"/>
    <property type="match status" value="1"/>
</dbReference>
<dbReference type="PANTHER" id="PTHR11432">
    <property type="entry name" value="NADH DEHYDROGENASE SUBUNIT 1"/>
    <property type="match status" value="1"/>
</dbReference>
<dbReference type="PANTHER" id="PTHR11432:SF3">
    <property type="entry name" value="NADH-UBIQUINONE OXIDOREDUCTASE CHAIN 1"/>
    <property type="match status" value="1"/>
</dbReference>
<dbReference type="Pfam" id="PF00146">
    <property type="entry name" value="NADHdh"/>
    <property type="match status" value="1"/>
</dbReference>
<dbReference type="PROSITE" id="PS00667">
    <property type="entry name" value="COMPLEX1_ND1_1"/>
    <property type="match status" value="1"/>
</dbReference>
<dbReference type="PROSITE" id="PS00668">
    <property type="entry name" value="COMPLEX1_ND1_2"/>
    <property type="match status" value="1"/>
</dbReference>
<name>NUOH_WOLPM</name>
<evidence type="ECO:0000255" key="1">
    <source>
        <dbReference type="HAMAP-Rule" id="MF_01350"/>
    </source>
</evidence>